<keyword id="KW-0004">4Fe-4S</keyword>
<keyword id="KW-0963">Cytoplasm</keyword>
<keyword id="KW-0408">Iron</keyword>
<keyword id="KW-0411">Iron-sulfur</keyword>
<keyword id="KW-0479">Metal-binding</keyword>
<keyword id="KW-0949">S-adenosyl-L-methionine</keyword>
<keyword id="KW-0808">Transferase</keyword>
<accession>Q3KLD9</accession>
<proteinExistence type="inferred from homology"/>
<feature type="chain" id="PRO_1000012209" description="Lipoyl synthase">
    <location>
        <begin position="1"/>
        <end position="311"/>
    </location>
</feature>
<feature type="domain" description="Radical SAM core" evidence="2">
    <location>
        <begin position="59"/>
        <end position="276"/>
    </location>
</feature>
<feature type="binding site" evidence="1">
    <location>
        <position position="47"/>
    </location>
    <ligand>
        <name>[4Fe-4S] cluster</name>
        <dbReference type="ChEBI" id="CHEBI:49883"/>
        <label>1</label>
    </ligand>
</feature>
<feature type="binding site" evidence="1">
    <location>
        <position position="52"/>
    </location>
    <ligand>
        <name>[4Fe-4S] cluster</name>
        <dbReference type="ChEBI" id="CHEBI:49883"/>
        <label>1</label>
    </ligand>
</feature>
<feature type="binding site" evidence="1">
    <location>
        <position position="58"/>
    </location>
    <ligand>
        <name>[4Fe-4S] cluster</name>
        <dbReference type="ChEBI" id="CHEBI:49883"/>
        <label>1</label>
    </ligand>
</feature>
<feature type="binding site" evidence="1">
    <location>
        <position position="73"/>
    </location>
    <ligand>
        <name>[4Fe-4S] cluster</name>
        <dbReference type="ChEBI" id="CHEBI:49883"/>
        <label>2</label>
        <note>4Fe-4S-S-AdoMet</note>
    </ligand>
</feature>
<feature type="binding site" evidence="1">
    <location>
        <position position="77"/>
    </location>
    <ligand>
        <name>[4Fe-4S] cluster</name>
        <dbReference type="ChEBI" id="CHEBI:49883"/>
        <label>2</label>
        <note>4Fe-4S-S-AdoMet</note>
    </ligand>
</feature>
<feature type="binding site" evidence="1">
    <location>
        <position position="80"/>
    </location>
    <ligand>
        <name>[4Fe-4S] cluster</name>
        <dbReference type="ChEBI" id="CHEBI:49883"/>
        <label>2</label>
        <note>4Fe-4S-S-AdoMet</note>
    </ligand>
</feature>
<feature type="binding site" evidence="1">
    <location>
        <position position="286"/>
    </location>
    <ligand>
        <name>[4Fe-4S] cluster</name>
        <dbReference type="ChEBI" id="CHEBI:49883"/>
        <label>1</label>
    </ligand>
</feature>
<evidence type="ECO:0000255" key="1">
    <source>
        <dbReference type="HAMAP-Rule" id="MF_00206"/>
    </source>
</evidence>
<evidence type="ECO:0000255" key="2">
    <source>
        <dbReference type="PROSITE-ProRule" id="PRU01266"/>
    </source>
</evidence>
<organism>
    <name type="scientific">Chlamydia trachomatis serovar A (strain ATCC VR-571B / DSM 19440 / HAR-13)</name>
    <dbReference type="NCBI Taxonomy" id="315277"/>
    <lineage>
        <taxon>Bacteria</taxon>
        <taxon>Pseudomonadati</taxon>
        <taxon>Chlamydiota</taxon>
        <taxon>Chlamydiia</taxon>
        <taxon>Chlamydiales</taxon>
        <taxon>Chlamydiaceae</taxon>
        <taxon>Chlamydia/Chlamydophila group</taxon>
        <taxon>Chlamydia</taxon>
    </lineage>
</organism>
<comment type="function">
    <text evidence="1">Catalyzes the radical-mediated insertion of two sulfur atoms into the C-6 and C-8 positions of the octanoyl moiety bound to the lipoyl domains of lipoate-dependent enzymes, thereby converting the octanoylated domains into lipoylated derivatives.</text>
</comment>
<comment type="catalytic activity">
    <reaction evidence="1">
        <text>[[Fe-S] cluster scaffold protein carrying a second [4Fe-4S](2+) cluster] + N(6)-octanoyl-L-lysyl-[protein] + 2 oxidized [2Fe-2S]-[ferredoxin] + 2 S-adenosyl-L-methionine + 4 H(+) = [[Fe-S] cluster scaffold protein] + N(6)-[(R)-dihydrolipoyl]-L-lysyl-[protein] + 4 Fe(3+) + 2 hydrogen sulfide + 2 5'-deoxyadenosine + 2 L-methionine + 2 reduced [2Fe-2S]-[ferredoxin]</text>
        <dbReference type="Rhea" id="RHEA:16585"/>
        <dbReference type="Rhea" id="RHEA-COMP:9928"/>
        <dbReference type="Rhea" id="RHEA-COMP:10000"/>
        <dbReference type="Rhea" id="RHEA-COMP:10001"/>
        <dbReference type="Rhea" id="RHEA-COMP:10475"/>
        <dbReference type="Rhea" id="RHEA-COMP:14568"/>
        <dbReference type="Rhea" id="RHEA-COMP:14569"/>
        <dbReference type="ChEBI" id="CHEBI:15378"/>
        <dbReference type="ChEBI" id="CHEBI:17319"/>
        <dbReference type="ChEBI" id="CHEBI:29034"/>
        <dbReference type="ChEBI" id="CHEBI:29919"/>
        <dbReference type="ChEBI" id="CHEBI:33722"/>
        <dbReference type="ChEBI" id="CHEBI:33737"/>
        <dbReference type="ChEBI" id="CHEBI:33738"/>
        <dbReference type="ChEBI" id="CHEBI:57844"/>
        <dbReference type="ChEBI" id="CHEBI:59789"/>
        <dbReference type="ChEBI" id="CHEBI:78809"/>
        <dbReference type="ChEBI" id="CHEBI:83100"/>
        <dbReference type="EC" id="2.8.1.8"/>
    </reaction>
</comment>
<comment type="cofactor">
    <cofactor evidence="1">
        <name>[4Fe-4S] cluster</name>
        <dbReference type="ChEBI" id="CHEBI:49883"/>
    </cofactor>
    <text evidence="1">Binds 2 [4Fe-4S] clusters per subunit. One cluster is coordinated with 3 cysteines and an exchangeable S-adenosyl-L-methionine.</text>
</comment>
<comment type="pathway">
    <text evidence="1">Protein modification; protein lipoylation via endogenous pathway; protein N(6)-(lipoyl)lysine from octanoyl-[acyl-carrier-protein]: step 2/2.</text>
</comment>
<comment type="subcellular location">
    <subcellularLocation>
        <location evidence="1">Cytoplasm</location>
    </subcellularLocation>
</comment>
<comment type="similarity">
    <text evidence="1">Belongs to the radical SAM superfamily. Lipoyl synthase family.</text>
</comment>
<name>LIPA_CHLTA</name>
<sequence length="311" mass="34665">MTDSESPTPKKSIPARFPKWLRQKLPLGRVFAQTDNTIKNKGLPTVCEEASCPNRTHCWSRHTATYLALGDACTRRCGFCDIDFTRNPLPPDPEEGAKIAESAKALGLKHIVITMVSRDDLEDGGASALVHIIETLHTELPTATIEVLASDFEGNIAALHHLLDAHIAIYNHNVETVERLTPFVRHKATYRRSLMMLENAAKYLPNLMTKSGIMVGLGEQESEVKQTLKDLADHGVKIVTIGQYLRPSRRHIPVKSYVSPETFDYYRSVGESLGLFIYAGPFVRSSFNADSVFEAMRQRETSTSSLLPNKD</sequence>
<reference key="1">
    <citation type="journal article" date="2005" name="Infect. Immun.">
        <title>Comparative genomic analysis of Chlamydia trachomatis oculotropic and genitotropic strains.</title>
        <authorList>
            <person name="Carlson J.H."/>
            <person name="Porcella S.F."/>
            <person name="McClarty G."/>
            <person name="Caldwell H.D."/>
        </authorList>
    </citation>
    <scope>NUCLEOTIDE SEQUENCE [LARGE SCALE GENOMIC DNA]</scope>
    <source>
        <strain>ATCC VR-571B / DSM 19440 / HAR-13</strain>
    </source>
</reference>
<protein>
    <recommendedName>
        <fullName evidence="1">Lipoyl synthase</fullName>
        <ecNumber evidence="1">2.8.1.8</ecNumber>
    </recommendedName>
    <alternativeName>
        <fullName evidence="1">Lip-syn</fullName>
        <shortName evidence="1">LS</shortName>
    </alternativeName>
    <alternativeName>
        <fullName evidence="1">Lipoate synthase</fullName>
    </alternativeName>
    <alternativeName>
        <fullName evidence="1">Lipoic acid synthase</fullName>
    </alternativeName>
    <alternativeName>
        <fullName evidence="1">Sulfur insertion protein LipA</fullName>
    </alternativeName>
</protein>
<dbReference type="EC" id="2.8.1.8" evidence="1"/>
<dbReference type="EMBL" id="CP000051">
    <property type="protein sequence ID" value="AAX50833.1"/>
    <property type="molecule type" value="Genomic_DNA"/>
</dbReference>
<dbReference type="RefSeq" id="WP_009871922.1">
    <property type="nucleotide sequence ID" value="NC_007429.1"/>
</dbReference>
<dbReference type="SMR" id="Q3KLD9"/>
<dbReference type="KEGG" id="cta:CTA_0608"/>
<dbReference type="HOGENOM" id="CLU_033144_2_1_0"/>
<dbReference type="UniPathway" id="UPA00538">
    <property type="reaction ID" value="UER00593"/>
</dbReference>
<dbReference type="Proteomes" id="UP000002532">
    <property type="component" value="Chromosome"/>
</dbReference>
<dbReference type="GO" id="GO:0005737">
    <property type="term" value="C:cytoplasm"/>
    <property type="evidence" value="ECO:0007669"/>
    <property type="project" value="UniProtKB-SubCell"/>
</dbReference>
<dbReference type="GO" id="GO:0051539">
    <property type="term" value="F:4 iron, 4 sulfur cluster binding"/>
    <property type="evidence" value="ECO:0007669"/>
    <property type="project" value="UniProtKB-UniRule"/>
</dbReference>
<dbReference type="GO" id="GO:0016992">
    <property type="term" value="F:lipoate synthase activity"/>
    <property type="evidence" value="ECO:0007669"/>
    <property type="project" value="UniProtKB-UniRule"/>
</dbReference>
<dbReference type="GO" id="GO:0046872">
    <property type="term" value="F:metal ion binding"/>
    <property type="evidence" value="ECO:0007669"/>
    <property type="project" value="UniProtKB-KW"/>
</dbReference>
<dbReference type="CDD" id="cd01335">
    <property type="entry name" value="Radical_SAM"/>
    <property type="match status" value="1"/>
</dbReference>
<dbReference type="FunFam" id="3.20.20.70:FF:000186">
    <property type="entry name" value="Lipoyl synthase"/>
    <property type="match status" value="1"/>
</dbReference>
<dbReference type="Gene3D" id="3.20.20.70">
    <property type="entry name" value="Aldolase class I"/>
    <property type="match status" value="1"/>
</dbReference>
<dbReference type="HAMAP" id="MF_00206">
    <property type="entry name" value="Lipoyl_synth"/>
    <property type="match status" value="1"/>
</dbReference>
<dbReference type="InterPro" id="IPR013785">
    <property type="entry name" value="Aldolase_TIM"/>
</dbReference>
<dbReference type="InterPro" id="IPR006638">
    <property type="entry name" value="Elp3/MiaA/NifB-like_rSAM"/>
</dbReference>
<dbReference type="InterPro" id="IPR031691">
    <property type="entry name" value="LIAS_N"/>
</dbReference>
<dbReference type="InterPro" id="IPR003698">
    <property type="entry name" value="Lipoyl_synth"/>
</dbReference>
<dbReference type="InterPro" id="IPR007197">
    <property type="entry name" value="rSAM"/>
</dbReference>
<dbReference type="NCBIfam" id="TIGR00510">
    <property type="entry name" value="lipA"/>
    <property type="match status" value="1"/>
</dbReference>
<dbReference type="NCBIfam" id="NF004019">
    <property type="entry name" value="PRK05481.1"/>
    <property type="match status" value="1"/>
</dbReference>
<dbReference type="NCBIfam" id="NF009544">
    <property type="entry name" value="PRK12928.1"/>
    <property type="match status" value="1"/>
</dbReference>
<dbReference type="PANTHER" id="PTHR10949">
    <property type="entry name" value="LIPOYL SYNTHASE"/>
    <property type="match status" value="1"/>
</dbReference>
<dbReference type="PANTHER" id="PTHR10949:SF0">
    <property type="entry name" value="LIPOYL SYNTHASE, MITOCHONDRIAL"/>
    <property type="match status" value="1"/>
</dbReference>
<dbReference type="Pfam" id="PF16881">
    <property type="entry name" value="LIAS_N"/>
    <property type="match status" value="1"/>
</dbReference>
<dbReference type="Pfam" id="PF04055">
    <property type="entry name" value="Radical_SAM"/>
    <property type="match status" value="1"/>
</dbReference>
<dbReference type="PIRSF" id="PIRSF005963">
    <property type="entry name" value="Lipoyl_synth"/>
    <property type="match status" value="1"/>
</dbReference>
<dbReference type="SFLD" id="SFLDF00271">
    <property type="entry name" value="lipoyl_synthase"/>
    <property type="match status" value="1"/>
</dbReference>
<dbReference type="SFLD" id="SFLDS00029">
    <property type="entry name" value="Radical_SAM"/>
    <property type="match status" value="1"/>
</dbReference>
<dbReference type="SMART" id="SM00729">
    <property type="entry name" value="Elp3"/>
    <property type="match status" value="1"/>
</dbReference>
<dbReference type="SUPFAM" id="SSF102114">
    <property type="entry name" value="Radical SAM enzymes"/>
    <property type="match status" value="1"/>
</dbReference>
<dbReference type="PROSITE" id="PS51918">
    <property type="entry name" value="RADICAL_SAM"/>
    <property type="match status" value="1"/>
</dbReference>
<gene>
    <name evidence="1" type="primary">lipA</name>
    <name type="ordered locus">CTA_0608</name>
</gene>